<feature type="chain" id="PRO_0000438915" description="Transcription factor MYB111">
    <location>
        <begin position="1"/>
        <end position="342"/>
    </location>
</feature>
<feature type="domain" description="HTH myb-type 1" evidence="1">
    <location>
        <begin position="9"/>
        <end position="61"/>
    </location>
</feature>
<feature type="domain" description="HTH myb-type 2" evidence="1">
    <location>
        <begin position="62"/>
        <end position="116"/>
    </location>
</feature>
<feature type="DNA-binding region" description="H-T-H motif" evidence="1">
    <location>
        <begin position="37"/>
        <end position="61"/>
    </location>
</feature>
<feature type="DNA-binding region" description="H-T-H motif" evidence="1">
    <location>
        <begin position="89"/>
        <end position="112"/>
    </location>
</feature>
<feature type="region of interest" description="Disordered" evidence="3">
    <location>
        <begin position="140"/>
        <end position="169"/>
    </location>
</feature>
<feature type="short sequence motif" description="Nuclear localization signal" evidence="2">
    <location>
        <begin position="154"/>
        <end position="161"/>
    </location>
</feature>
<feature type="compositionally biased region" description="Low complexity" evidence="3">
    <location>
        <begin position="140"/>
        <end position="149"/>
    </location>
</feature>
<feature type="compositionally biased region" description="Basic residues" evidence="3">
    <location>
        <begin position="150"/>
        <end position="169"/>
    </location>
</feature>
<gene>
    <name evidence="8" type="primary">MYB111</name>
    <name evidence="9" type="synonym">PFG3</name>
    <name evidence="10" type="ordered locus">At5g49330</name>
    <name evidence="11" type="ORF">K21P3.23</name>
</gene>
<sequence>MGRAPCCEKIGLKRGRWTAEEDEILTKYIQTNGEGSWRSLPKKAGLLRCGKSCRLRWINYLRRDLKRGNITSDEEEIIVKLHSLLGNRWSLIATHLPGRTDNEIKNYWNSHLSRKIYAFTAVSGDGHNLLVNDVVLKKSCSSSSGAKNNNKTKKKKKGRTSRSSMKKHKQMVTASQCFSQPKELESDFSEGGQNGNFEGESLGPYEWLDGELERLLSSCVWECTSEEAVIGVNDEKVCESGDNSSCCVNLFEEEQGSETKIGHVGITEVDHDMTVEREREGSFLSSNSNENNDKDWWVGLCNSSEVGFGVDEELLDWEFQGNVTCQSDDLWDLSDIGEITLE</sequence>
<keyword id="KW-0238">DNA-binding</keyword>
<keyword id="KW-0539">Nucleus</keyword>
<keyword id="KW-1185">Reference proteome</keyword>
<keyword id="KW-0804">Transcription</keyword>
<keyword id="KW-0805">Transcription regulation</keyword>
<name>MY111_ARATH</name>
<comment type="function">
    <text evidence="4 5 6">Flavonol-specific transcription activator involved in the regulation of several genes of flavonoid biosynthesis. Activates the expression of CHS, CHI, F3H and FLS1. Controls flavonol biosynthesis primarily in cotyledons and leaves (PubMed:17419845, PubMed:20731781). Confers tolerance to UV-B (PubMed:19895401).</text>
</comment>
<comment type="interaction">
    <interactant intactId="EBI-25528560">
        <id>Q9FJ07</id>
    </interactant>
    <interactant intactId="EBI-2349513">
        <id>Q84MC7</id>
        <label>PYL9</label>
    </interactant>
    <organismsDiffer>false</organismsDiffer>
    <experiments>3</experiments>
</comment>
<comment type="subcellular location">
    <subcellularLocation>
        <location evidence="1 2">Nucleus</location>
    </subcellularLocation>
</comment>
<comment type="tissue specificity">
    <text evidence="4">Expressed in seedlings, cotyledons and young leaves.</text>
</comment>
<comment type="developmental stage">
    <text evidence="4">In seedlings, predominantly expressed in cotyledons. Restricted to the cotyledons and primary leaves.</text>
</comment>
<comment type="induction">
    <text evidence="5">Triggered by HY5 in response to light and UV-B.</text>
</comment>
<comment type="disruption phenotype">
    <text evidence="4 5 6">Reduced flavonols levels in leaves. The double mutants myb11 myb111 and myb12 myb111 and triple mutant myb11 myb12 myb111 accumulate less flavonols in roots, leaves, stems, inflorescence, and siliques (PubMed:20731781). The triple mutant myb11 myb12 myb111 is impaired in flavonols biosynthesis and exhibits a reduced UV-B tolerance (PubMed:17419845, PubMed:19895401).</text>
</comment>
<comment type="biotechnology">
    <text evidence="7">Promotes flavonoid biosynthesis in a light-dependent manner when expressed in tobacco (Nicotiana tabacum) through up-regulation of the biosynthetic genes.</text>
</comment>
<organism>
    <name type="scientific">Arabidopsis thaliana</name>
    <name type="common">Mouse-ear cress</name>
    <dbReference type="NCBI Taxonomy" id="3702"/>
    <lineage>
        <taxon>Eukaryota</taxon>
        <taxon>Viridiplantae</taxon>
        <taxon>Streptophyta</taxon>
        <taxon>Embryophyta</taxon>
        <taxon>Tracheophyta</taxon>
        <taxon>Spermatophyta</taxon>
        <taxon>Magnoliopsida</taxon>
        <taxon>eudicotyledons</taxon>
        <taxon>Gunneridae</taxon>
        <taxon>Pentapetalae</taxon>
        <taxon>rosids</taxon>
        <taxon>malvids</taxon>
        <taxon>Brassicales</taxon>
        <taxon>Brassicaceae</taxon>
        <taxon>Camelineae</taxon>
        <taxon>Arabidopsis</taxon>
    </lineage>
</organism>
<evidence type="ECO:0000255" key="1">
    <source>
        <dbReference type="PROSITE-ProRule" id="PRU00625"/>
    </source>
</evidence>
<evidence type="ECO:0000255" key="2">
    <source>
        <dbReference type="PROSITE-ProRule" id="PRU00768"/>
    </source>
</evidence>
<evidence type="ECO:0000256" key="3">
    <source>
        <dbReference type="SAM" id="MobiDB-lite"/>
    </source>
</evidence>
<evidence type="ECO:0000269" key="4">
    <source>
    </source>
</evidence>
<evidence type="ECO:0000269" key="5">
    <source>
    </source>
</evidence>
<evidence type="ECO:0000269" key="6">
    <source>
    </source>
</evidence>
<evidence type="ECO:0000269" key="7">
    <source>
    </source>
</evidence>
<evidence type="ECO:0000303" key="8">
    <source>
    </source>
</evidence>
<evidence type="ECO:0000303" key="9">
    <source>
    </source>
</evidence>
<evidence type="ECO:0000312" key="10">
    <source>
        <dbReference type="Araport" id="AT5G49330"/>
    </source>
</evidence>
<evidence type="ECO:0000312" key="11">
    <source>
        <dbReference type="EMBL" id="BAB10351.1"/>
    </source>
</evidence>
<protein>
    <recommendedName>
        <fullName evidence="8">Transcription factor MYB111</fullName>
    </recommendedName>
    <alternativeName>
        <fullName evidence="8">Myb-related protein 111</fullName>
        <shortName evidence="8">AtMYB111</shortName>
    </alternativeName>
    <alternativeName>
        <fullName evidence="9">Protein PRODUCTION OF FLAVONOL GLYCOSIDES 3</fullName>
    </alternativeName>
</protein>
<reference key="1">
    <citation type="journal article" date="2001" name="Curr. Opin. Plant Biol.">
        <title>The R2R3-MYB gene family in Arabidopsis thaliana.</title>
        <authorList>
            <person name="Stracke R."/>
            <person name="Werber M."/>
            <person name="Weisshaar B."/>
        </authorList>
    </citation>
    <scope>NUCLEOTIDE SEQUENCE [MRNA]</scope>
    <scope>GENE FAMILY</scope>
    <scope>NOMENCLATURE</scope>
    <source>
        <strain>cv. Columbia</strain>
    </source>
</reference>
<reference key="2">
    <citation type="submission" date="2004-02" db="EMBL/GenBank/DDBJ databases">
        <title>The MYB transcription factor family in Arabidopsis: A genome-wide cloning and expression pattern analysis.</title>
        <authorList>
            <person name="Qu L."/>
            <person name="Gu H."/>
        </authorList>
    </citation>
    <scope>NUCLEOTIDE SEQUENCE [MRNA]</scope>
</reference>
<reference key="3">
    <citation type="journal article" date="1998" name="DNA Res.">
        <title>Structural analysis of Arabidopsis thaliana chromosome 5. VIII. Sequence features of the regions of 1,081,958 bp covered by seventeen physically assigned P1 and TAC clones.</title>
        <authorList>
            <person name="Asamizu E."/>
            <person name="Sato S."/>
            <person name="Kaneko T."/>
            <person name="Nakamura Y."/>
            <person name="Kotani H."/>
            <person name="Miyajima N."/>
            <person name="Tabata S."/>
        </authorList>
    </citation>
    <scope>NUCLEOTIDE SEQUENCE [LARGE SCALE GENOMIC DNA]</scope>
    <source>
        <strain>cv. Columbia</strain>
    </source>
</reference>
<reference key="4">
    <citation type="journal article" date="2017" name="Plant J.">
        <title>Araport11: a complete reannotation of the Arabidopsis thaliana reference genome.</title>
        <authorList>
            <person name="Cheng C.Y."/>
            <person name="Krishnakumar V."/>
            <person name="Chan A.P."/>
            <person name="Thibaud-Nissen F."/>
            <person name="Schobel S."/>
            <person name="Town C.D."/>
        </authorList>
    </citation>
    <scope>GENOME REANNOTATION</scope>
    <source>
        <strain>cv. Columbia</strain>
    </source>
</reference>
<reference key="5">
    <citation type="journal article" date="2007" name="Plant J.">
        <title>Differential regulation of closely related R2R3-MYB transcription factors controls flavonol accumulation in different parts of the Arabidopsis thaliana seedling.</title>
        <authorList>
            <person name="Stracke R."/>
            <person name="Ishihara H."/>
            <person name="Huep G."/>
            <person name="Barsch A."/>
            <person name="Mehrtens F."/>
            <person name="Niehaus K."/>
            <person name="Weisshaar B."/>
        </authorList>
    </citation>
    <scope>FUNCTION</scope>
    <scope>DISRUPTION PHENOTYPE</scope>
    <scope>TISSUE SPECIFICITY</scope>
    <scope>DEVELOPMENTAL STAGE</scope>
    <source>
        <strain>cv. Columbia</strain>
    </source>
</reference>
<reference key="6">
    <citation type="journal article" date="2010" name="New Phytol.">
        <title>Analysis of PRODUCTION OF FLAVONOL GLYCOSIDES-dependent flavonol glycoside accumulation in Arabidopsis thaliana plants reveals MYB11-, MYB12- and MYB111-independent flavonol glycoside accumulation.</title>
        <authorList>
            <person name="Stracke R."/>
            <person name="Jahns O."/>
            <person name="Keck M."/>
            <person name="Tohge T."/>
            <person name="Niehaus K."/>
            <person name="Fernie A.R."/>
            <person name="Weisshaar B."/>
        </authorList>
    </citation>
    <scope>FUNCTION</scope>
    <scope>DISRUPTION PHENOTYPE</scope>
    <source>
        <strain>cv. Columbia</strain>
    </source>
</reference>
<reference key="7">
    <citation type="journal article" date="2010" name="Plant Cell Environ.">
        <title>The Arabidopsis bZIP transcription factor HY5 regulates expression of the PFG1/MYB12 gene in response to light and ultraviolet-B radiation.</title>
        <authorList>
            <person name="Stracke R."/>
            <person name="Favory J.-J."/>
            <person name="Gruber H."/>
            <person name="Bartelniewoehner L."/>
            <person name="Bartels S."/>
            <person name="Binkert M."/>
            <person name="Funk M."/>
            <person name="Weisshaar B."/>
            <person name="Ulm R."/>
        </authorList>
    </citation>
    <scope>FUNCTION</scope>
    <scope>INDUCTION BY LIGHT AND UV-B</scope>
    <scope>DISRUPTION PHENOTYPE</scope>
    <source>
        <strain>cv. Columbia</strain>
        <strain>cv. Wassilewskija</strain>
    </source>
</reference>
<reference key="8">
    <citation type="journal article" date="2014" name="Sci. Rep.">
        <title>Expression of Arabidopsis MYB transcription factor, AtMYB111, in tobacco requires light to modulate flavonol content.</title>
        <authorList>
            <person name="Pandey A."/>
            <person name="Misra P."/>
            <person name="Bhambhani S."/>
            <person name="Bhatia C."/>
            <person name="Trivedi P.K."/>
        </authorList>
    </citation>
    <scope>BIOTECHNOLOGY</scope>
</reference>
<accession>Q9FJ07</accession>
<dbReference type="EMBL" id="AF371977">
    <property type="protein sequence ID" value="AAK97396.1"/>
    <property type="molecule type" value="mRNA"/>
</dbReference>
<dbReference type="EMBL" id="AY519634">
    <property type="protein sequence ID" value="AAS10104.1"/>
    <property type="molecule type" value="mRNA"/>
</dbReference>
<dbReference type="EMBL" id="AB016872">
    <property type="protein sequence ID" value="BAB10351.1"/>
    <property type="molecule type" value="Genomic_DNA"/>
</dbReference>
<dbReference type="EMBL" id="CP002688">
    <property type="protein sequence ID" value="AED95797.1"/>
    <property type="molecule type" value="Genomic_DNA"/>
</dbReference>
<dbReference type="RefSeq" id="NP_199744.1">
    <property type="nucleotide sequence ID" value="NM_124310.3"/>
</dbReference>
<dbReference type="SMR" id="Q9FJ07"/>
<dbReference type="FunCoup" id="Q9FJ07">
    <property type="interactions" value="22"/>
</dbReference>
<dbReference type="IntAct" id="Q9FJ07">
    <property type="interactions" value="2"/>
</dbReference>
<dbReference type="STRING" id="3702.Q9FJ07"/>
<dbReference type="PaxDb" id="3702-AT5G49330.1"/>
<dbReference type="EnsemblPlants" id="AT5G49330.1">
    <property type="protein sequence ID" value="AT5G49330.1"/>
    <property type="gene ID" value="AT5G49330"/>
</dbReference>
<dbReference type="GeneID" id="834993"/>
<dbReference type="Gramene" id="AT5G49330.1">
    <property type="protein sequence ID" value="AT5G49330.1"/>
    <property type="gene ID" value="AT5G49330"/>
</dbReference>
<dbReference type="KEGG" id="ath:AT5G49330"/>
<dbReference type="Araport" id="AT5G49330"/>
<dbReference type="TAIR" id="AT5G49330">
    <property type="gene designation" value="MYB111"/>
</dbReference>
<dbReference type="eggNOG" id="KOG0048">
    <property type="taxonomic scope" value="Eukaryota"/>
</dbReference>
<dbReference type="HOGENOM" id="CLU_028567_6_3_1"/>
<dbReference type="InParanoid" id="Q9FJ07"/>
<dbReference type="OMA" id="LDWEFQG"/>
<dbReference type="OrthoDB" id="2143914at2759"/>
<dbReference type="PhylomeDB" id="Q9FJ07"/>
<dbReference type="PRO" id="PR:Q9FJ07"/>
<dbReference type="Proteomes" id="UP000006548">
    <property type="component" value="Chromosome 5"/>
</dbReference>
<dbReference type="ExpressionAtlas" id="Q9FJ07">
    <property type="expression patterns" value="baseline and differential"/>
</dbReference>
<dbReference type="GO" id="GO:0005634">
    <property type="term" value="C:nucleus"/>
    <property type="evidence" value="ECO:0007669"/>
    <property type="project" value="UniProtKB-SubCell"/>
</dbReference>
<dbReference type="GO" id="GO:0003677">
    <property type="term" value="F:DNA binding"/>
    <property type="evidence" value="ECO:0007669"/>
    <property type="project" value="UniProtKB-KW"/>
</dbReference>
<dbReference type="GO" id="GO:0003700">
    <property type="term" value="F:DNA-binding transcription factor activity"/>
    <property type="evidence" value="ECO:0000250"/>
    <property type="project" value="TAIR"/>
</dbReference>
<dbReference type="GO" id="GO:0051555">
    <property type="term" value="P:flavonol biosynthetic process"/>
    <property type="evidence" value="ECO:0000315"/>
    <property type="project" value="TAIR"/>
</dbReference>
<dbReference type="GO" id="GO:1900386">
    <property type="term" value="P:positive regulation of flavonol biosynthetic process"/>
    <property type="evidence" value="ECO:0000315"/>
    <property type="project" value="UniProtKB"/>
</dbReference>
<dbReference type="GO" id="GO:0009416">
    <property type="term" value="P:response to light stimulus"/>
    <property type="evidence" value="ECO:0000270"/>
    <property type="project" value="UniProtKB"/>
</dbReference>
<dbReference type="GO" id="GO:0010224">
    <property type="term" value="P:response to UV-B"/>
    <property type="evidence" value="ECO:0000315"/>
    <property type="project" value="UniProtKB"/>
</dbReference>
<dbReference type="CDD" id="cd00167">
    <property type="entry name" value="SANT"/>
    <property type="match status" value="2"/>
</dbReference>
<dbReference type="FunFam" id="1.10.10.60:FF:000121">
    <property type="entry name" value="Myb transcription factor"/>
    <property type="match status" value="1"/>
</dbReference>
<dbReference type="Gene3D" id="1.10.10.60">
    <property type="entry name" value="Homeodomain-like"/>
    <property type="match status" value="2"/>
</dbReference>
<dbReference type="InterPro" id="IPR009057">
    <property type="entry name" value="Homeodomain-like_sf"/>
</dbReference>
<dbReference type="InterPro" id="IPR017930">
    <property type="entry name" value="Myb_dom"/>
</dbReference>
<dbReference type="InterPro" id="IPR015495">
    <property type="entry name" value="Myb_TF_plants"/>
</dbReference>
<dbReference type="InterPro" id="IPR001005">
    <property type="entry name" value="SANT/Myb"/>
</dbReference>
<dbReference type="PANTHER" id="PTHR47999:SF91">
    <property type="entry name" value="TRANSCRIPTION FACTOR MYB111"/>
    <property type="match status" value="1"/>
</dbReference>
<dbReference type="PANTHER" id="PTHR47999">
    <property type="entry name" value="TRANSCRIPTION FACTOR MYB8-RELATED-RELATED"/>
    <property type="match status" value="1"/>
</dbReference>
<dbReference type="Pfam" id="PF00249">
    <property type="entry name" value="Myb_DNA-binding"/>
    <property type="match status" value="2"/>
</dbReference>
<dbReference type="SMART" id="SM00717">
    <property type="entry name" value="SANT"/>
    <property type="match status" value="2"/>
</dbReference>
<dbReference type="SUPFAM" id="SSF46689">
    <property type="entry name" value="Homeodomain-like"/>
    <property type="match status" value="1"/>
</dbReference>
<dbReference type="PROSITE" id="PS51294">
    <property type="entry name" value="HTH_MYB"/>
    <property type="match status" value="2"/>
</dbReference>
<proteinExistence type="evidence at protein level"/>